<feature type="chain" id="PRO_1000052467" description="Large ribosomal subunit protein uL4">
    <location>
        <begin position="1"/>
        <end position="210"/>
    </location>
</feature>
<feature type="region of interest" description="Disordered" evidence="2">
    <location>
        <begin position="46"/>
        <end position="85"/>
    </location>
</feature>
<feature type="compositionally biased region" description="Basic residues" evidence="2">
    <location>
        <begin position="60"/>
        <end position="71"/>
    </location>
</feature>
<dbReference type="EMBL" id="CP000551">
    <property type="protein sequence ID" value="ABM71047.1"/>
    <property type="molecule type" value="Genomic_DNA"/>
</dbReference>
<dbReference type="RefSeq" id="WP_011819169.1">
    <property type="nucleotide sequence ID" value="NC_008816.1"/>
</dbReference>
<dbReference type="SMR" id="A2BTD6"/>
<dbReference type="STRING" id="146891.A9601_17641"/>
<dbReference type="KEGG" id="pmb:A9601_17641"/>
<dbReference type="eggNOG" id="COG0088">
    <property type="taxonomic scope" value="Bacteria"/>
</dbReference>
<dbReference type="HOGENOM" id="CLU_041575_5_2_3"/>
<dbReference type="OrthoDB" id="9803201at2"/>
<dbReference type="Proteomes" id="UP000002590">
    <property type="component" value="Chromosome"/>
</dbReference>
<dbReference type="GO" id="GO:1990904">
    <property type="term" value="C:ribonucleoprotein complex"/>
    <property type="evidence" value="ECO:0007669"/>
    <property type="project" value="UniProtKB-KW"/>
</dbReference>
<dbReference type="GO" id="GO:0005840">
    <property type="term" value="C:ribosome"/>
    <property type="evidence" value="ECO:0007669"/>
    <property type="project" value="UniProtKB-KW"/>
</dbReference>
<dbReference type="GO" id="GO:0019843">
    <property type="term" value="F:rRNA binding"/>
    <property type="evidence" value="ECO:0007669"/>
    <property type="project" value="UniProtKB-UniRule"/>
</dbReference>
<dbReference type="GO" id="GO:0003735">
    <property type="term" value="F:structural constituent of ribosome"/>
    <property type="evidence" value="ECO:0007669"/>
    <property type="project" value="InterPro"/>
</dbReference>
<dbReference type="GO" id="GO:0006412">
    <property type="term" value="P:translation"/>
    <property type="evidence" value="ECO:0007669"/>
    <property type="project" value="UniProtKB-UniRule"/>
</dbReference>
<dbReference type="Gene3D" id="3.40.1370.10">
    <property type="match status" value="1"/>
</dbReference>
<dbReference type="HAMAP" id="MF_01328_B">
    <property type="entry name" value="Ribosomal_uL4_B"/>
    <property type="match status" value="1"/>
</dbReference>
<dbReference type="InterPro" id="IPR002136">
    <property type="entry name" value="Ribosomal_uL4"/>
</dbReference>
<dbReference type="InterPro" id="IPR013005">
    <property type="entry name" value="Ribosomal_uL4-like"/>
</dbReference>
<dbReference type="InterPro" id="IPR023574">
    <property type="entry name" value="Ribosomal_uL4_dom_sf"/>
</dbReference>
<dbReference type="NCBIfam" id="TIGR03953">
    <property type="entry name" value="rplD_bact"/>
    <property type="match status" value="1"/>
</dbReference>
<dbReference type="PANTHER" id="PTHR10746">
    <property type="entry name" value="50S RIBOSOMAL PROTEIN L4"/>
    <property type="match status" value="1"/>
</dbReference>
<dbReference type="PANTHER" id="PTHR10746:SF17">
    <property type="entry name" value="LARGE RIBOSOMAL SUBUNIT PROTEIN UL4C"/>
    <property type="match status" value="1"/>
</dbReference>
<dbReference type="Pfam" id="PF00573">
    <property type="entry name" value="Ribosomal_L4"/>
    <property type="match status" value="1"/>
</dbReference>
<dbReference type="SUPFAM" id="SSF52166">
    <property type="entry name" value="Ribosomal protein L4"/>
    <property type="match status" value="1"/>
</dbReference>
<reference key="1">
    <citation type="journal article" date="2007" name="PLoS Genet.">
        <title>Patterns and implications of gene gain and loss in the evolution of Prochlorococcus.</title>
        <authorList>
            <person name="Kettler G.C."/>
            <person name="Martiny A.C."/>
            <person name="Huang K."/>
            <person name="Zucker J."/>
            <person name="Coleman M.L."/>
            <person name="Rodrigue S."/>
            <person name="Chen F."/>
            <person name="Lapidus A."/>
            <person name="Ferriera S."/>
            <person name="Johnson J."/>
            <person name="Steglich C."/>
            <person name="Church G.M."/>
            <person name="Richardson P."/>
            <person name="Chisholm S.W."/>
        </authorList>
    </citation>
    <scope>NUCLEOTIDE SEQUENCE [LARGE SCALE GENOMIC DNA]</scope>
    <source>
        <strain>AS9601</strain>
    </source>
</reference>
<comment type="function">
    <text evidence="1">One of the primary rRNA binding proteins, this protein initially binds near the 5'-end of the 23S rRNA. It is important during the early stages of 50S assembly. It makes multiple contacts with different domains of the 23S rRNA in the assembled 50S subunit and ribosome.</text>
</comment>
<comment type="function">
    <text evidence="1">Forms part of the polypeptide exit tunnel.</text>
</comment>
<comment type="subunit">
    <text evidence="1">Part of the 50S ribosomal subunit.</text>
</comment>
<comment type="similarity">
    <text evidence="1">Belongs to the universal ribosomal protein uL4 family.</text>
</comment>
<proteinExistence type="inferred from homology"/>
<organism>
    <name type="scientific">Prochlorococcus marinus (strain AS9601)</name>
    <dbReference type="NCBI Taxonomy" id="146891"/>
    <lineage>
        <taxon>Bacteria</taxon>
        <taxon>Bacillati</taxon>
        <taxon>Cyanobacteriota</taxon>
        <taxon>Cyanophyceae</taxon>
        <taxon>Synechococcales</taxon>
        <taxon>Prochlorococcaceae</taxon>
        <taxon>Prochlorococcus</taxon>
    </lineage>
</organism>
<sequence length="210" mass="23051">MTTLETLKWDGKKSGKVSLDLAVAKETSSADLIHRAVLRQLANKRQGTASTLTRSEVRGGGRKPYKQKGTGRARQGSIRTPLRPGGGIIFGPKPRSYNLDMNRKERRLALRTALMSRVSDMKAVEDFGSTLKQPKTSDIINGLARLGIQKTEKVLVILDSPSDIIKKSINNIEKVKLIAADQLNVFDILNANKLVIGQSAIDKIQEVYAS</sequence>
<evidence type="ECO:0000255" key="1">
    <source>
        <dbReference type="HAMAP-Rule" id="MF_01328"/>
    </source>
</evidence>
<evidence type="ECO:0000256" key="2">
    <source>
        <dbReference type="SAM" id="MobiDB-lite"/>
    </source>
</evidence>
<evidence type="ECO:0000305" key="3"/>
<gene>
    <name evidence="1" type="primary">rplD</name>
    <name evidence="1" type="synonym">rpl4</name>
    <name type="ordered locus">A9601_17641</name>
</gene>
<protein>
    <recommendedName>
        <fullName evidence="1">Large ribosomal subunit protein uL4</fullName>
    </recommendedName>
    <alternativeName>
        <fullName evidence="3">50S ribosomal protein L4</fullName>
    </alternativeName>
</protein>
<keyword id="KW-0687">Ribonucleoprotein</keyword>
<keyword id="KW-0689">Ribosomal protein</keyword>
<keyword id="KW-0694">RNA-binding</keyword>
<keyword id="KW-0699">rRNA-binding</keyword>
<name>RL4_PROMS</name>
<accession>A2BTD6</accession>